<comment type="function">
    <text evidence="1">Catalyzes the phosphorylation of pantothenate (Pan), the first step in CoA biosynthesis.</text>
</comment>
<comment type="catalytic activity">
    <reaction evidence="1">
        <text>(R)-pantothenate + ATP = (R)-4'-phosphopantothenate + ADP + H(+)</text>
        <dbReference type="Rhea" id="RHEA:16373"/>
        <dbReference type="ChEBI" id="CHEBI:10986"/>
        <dbReference type="ChEBI" id="CHEBI:15378"/>
        <dbReference type="ChEBI" id="CHEBI:29032"/>
        <dbReference type="ChEBI" id="CHEBI:30616"/>
        <dbReference type="ChEBI" id="CHEBI:456216"/>
        <dbReference type="EC" id="2.7.1.33"/>
    </reaction>
</comment>
<comment type="cofactor">
    <cofactor evidence="1">
        <name>NH4(+)</name>
        <dbReference type="ChEBI" id="CHEBI:28938"/>
    </cofactor>
    <cofactor evidence="1">
        <name>K(+)</name>
        <dbReference type="ChEBI" id="CHEBI:29103"/>
    </cofactor>
    <text evidence="1">A monovalent cation. Ammonium or potassium.</text>
</comment>
<comment type="pathway">
    <text evidence="1">Cofactor biosynthesis; coenzyme A biosynthesis; CoA from (R)-pantothenate: step 1/5.</text>
</comment>
<comment type="subunit">
    <text evidence="1">Homodimer.</text>
</comment>
<comment type="subcellular location">
    <subcellularLocation>
        <location evidence="1">Cytoplasm</location>
    </subcellularLocation>
</comment>
<comment type="similarity">
    <text evidence="1">Belongs to the type III pantothenate kinase family.</text>
</comment>
<keyword id="KW-0067">ATP-binding</keyword>
<keyword id="KW-0173">Coenzyme A biosynthesis</keyword>
<keyword id="KW-0963">Cytoplasm</keyword>
<keyword id="KW-0418">Kinase</keyword>
<keyword id="KW-0547">Nucleotide-binding</keyword>
<keyword id="KW-0630">Potassium</keyword>
<keyword id="KW-0808">Transferase</keyword>
<gene>
    <name evidence="1" type="primary">coaX</name>
    <name type="ordered locus">Bcen2424_2905</name>
</gene>
<accession>A0KAX6</accession>
<dbReference type="EC" id="2.7.1.33" evidence="1"/>
<dbReference type="EMBL" id="CP000458">
    <property type="protein sequence ID" value="ABK09653.1"/>
    <property type="molecule type" value="Genomic_DNA"/>
</dbReference>
<dbReference type="RefSeq" id="WP_011546318.1">
    <property type="nucleotide sequence ID" value="NC_008542.1"/>
</dbReference>
<dbReference type="SMR" id="A0KAX6"/>
<dbReference type="KEGG" id="bch:Bcen2424_2905"/>
<dbReference type="HOGENOM" id="CLU_066627_0_0_4"/>
<dbReference type="UniPathway" id="UPA00241">
    <property type="reaction ID" value="UER00352"/>
</dbReference>
<dbReference type="GO" id="GO:0005737">
    <property type="term" value="C:cytoplasm"/>
    <property type="evidence" value="ECO:0007669"/>
    <property type="project" value="UniProtKB-SubCell"/>
</dbReference>
<dbReference type="GO" id="GO:0005524">
    <property type="term" value="F:ATP binding"/>
    <property type="evidence" value="ECO:0007669"/>
    <property type="project" value="UniProtKB-UniRule"/>
</dbReference>
<dbReference type="GO" id="GO:0004594">
    <property type="term" value="F:pantothenate kinase activity"/>
    <property type="evidence" value="ECO:0007669"/>
    <property type="project" value="UniProtKB-UniRule"/>
</dbReference>
<dbReference type="GO" id="GO:0015937">
    <property type="term" value="P:coenzyme A biosynthetic process"/>
    <property type="evidence" value="ECO:0007669"/>
    <property type="project" value="UniProtKB-UniRule"/>
</dbReference>
<dbReference type="CDD" id="cd24015">
    <property type="entry name" value="ASKHA_NBD_PanK-III"/>
    <property type="match status" value="1"/>
</dbReference>
<dbReference type="Gene3D" id="3.30.420.40">
    <property type="match status" value="2"/>
</dbReference>
<dbReference type="HAMAP" id="MF_01274">
    <property type="entry name" value="Pantothen_kinase_3"/>
    <property type="match status" value="1"/>
</dbReference>
<dbReference type="InterPro" id="IPR043129">
    <property type="entry name" value="ATPase_NBD"/>
</dbReference>
<dbReference type="InterPro" id="IPR004619">
    <property type="entry name" value="Type_III_PanK"/>
</dbReference>
<dbReference type="NCBIfam" id="TIGR00671">
    <property type="entry name" value="baf"/>
    <property type="match status" value="1"/>
</dbReference>
<dbReference type="NCBIfam" id="NF009868">
    <property type="entry name" value="PRK13328.1-4"/>
    <property type="match status" value="1"/>
</dbReference>
<dbReference type="PANTHER" id="PTHR34265">
    <property type="entry name" value="TYPE III PANTOTHENATE KINASE"/>
    <property type="match status" value="1"/>
</dbReference>
<dbReference type="PANTHER" id="PTHR34265:SF1">
    <property type="entry name" value="TYPE III PANTOTHENATE KINASE"/>
    <property type="match status" value="1"/>
</dbReference>
<dbReference type="Pfam" id="PF03309">
    <property type="entry name" value="Pan_kinase"/>
    <property type="match status" value="1"/>
</dbReference>
<dbReference type="SUPFAM" id="SSF53067">
    <property type="entry name" value="Actin-like ATPase domain"/>
    <property type="match status" value="2"/>
</dbReference>
<proteinExistence type="inferred from homology"/>
<protein>
    <recommendedName>
        <fullName evidence="1">Type III pantothenate kinase</fullName>
        <ecNumber evidence="1">2.7.1.33</ecNumber>
    </recommendedName>
    <alternativeName>
        <fullName evidence="1">PanK-III</fullName>
    </alternativeName>
    <alternativeName>
        <fullName evidence="1">Pantothenic acid kinase</fullName>
    </alternativeName>
</protein>
<sequence length="265" mass="27703">MSEPHLLIDAGNSRIKWALADARRSLVDTGAFGHTRDGGADPDWSHLPRPRGAWISNVAGADVAARLDALLDARWPGLPRTTIRARPVQCGVTNGYTTPEQLGSDRWAGLIGAHAAFPGEHLLIATFGTATTLEALRADGRFTGGLIAPGWALMMRALGTHTAQLPTLTTDIASGLLAGAQAEPFQIDTPRSLSAGCLYAQAGLIERAWRDLVAAWQAPVRLVLAGGAADDVARALTVAHTRHDALILSGLALIAADAAPATAQD</sequence>
<feature type="chain" id="PRO_1000054361" description="Type III pantothenate kinase">
    <location>
        <begin position="1"/>
        <end position="265"/>
    </location>
</feature>
<feature type="active site" description="Proton acceptor" evidence="1">
    <location>
        <position position="105"/>
    </location>
</feature>
<feature type="binding site" evidence="1">
    <location>
        <begin position="9"/>
        <end position="16"/>
    </location>
    <ligand>
        <name>ATP</name>
        <dbReference type="ChEBI" id="CHEBI:30616"/>
    </ligand>
</feature>
<feature type="binding site" evidence="1">
    <location>
        <position position="96"/>
    </location>
    <ligand>
        <name>substrate</name>
    </ligand>
</feature>
<feature type="binding site" evidence="1">
    <location>
        <begin position="103"/>
        <end position="106"/>
    </location>
    <ligand>
        <name>substrate</name>
    </ligand>
</feature>
<feature type="binding site" evidence="1">
    <location>
        <position position="129"/>
    </location>
    <ligand>
        <name>ATP</name>
        <dbReference type="ChEBI" id="CHEBI:30616"/>
    </ligand>
</feature>
<feature type="binding site" evidence="1">
    <location>
        <position position="189"/>
    </location>
    <ligand>
        <name>substrate</name>
    </ligand>
</feature>
<reference key="1">
    <citation type="submission" date="2006-08" db="EMBL/GenBank/DDBJ databases">
        <title>Complete sequence of chromosome 1 of Burkholderia cenocepacia HI2424.</title>
        <authorList>
            <person name="Copeland A."/>
            <person name="Lucas S."/>
            <person name="Lapidus A."/>
            <person name="Barry K."/>
            <person name="Detter J.C."/>
            <person name="Glavina del Rio T."/>
            <person name="Hammon N."/>
            <person name="Israni S."/>
            <person name="Pitluck S."/>
            <person name="Chain P."/>
            <person name="Malfatti S."/>
            <person name="Shin M."/>
            <person name="Vergez L."/>
            <person name="Schmutz J."/>
            <person name="Larimer F."/>
            <person name="Land M."/>
            <person name="Hauser L."/>
            <person name="Kyrpides N."/>
            <person name="Kim E."/>
            <person name="LiPuma J.J."/>
            <person name="Gonzalez C.F."/>
            <person name="Konstantinidis K."/>
            <person name="Tiedje J.M."/>
            <person name="Richardson P."/>
        </authorList>
    </citation>
    <scope>NUCLEOTIDE SEQUENCE [LARGE SCALE GENOMIC DNA]</scope>
    <source>
        <strain>HI2424</strain>
    </source>
</reference>
<name>COAX_BURCH</name>
<evidence type="ECO:0000255" key="1">
    <source>
        <dbReference type="HAMAP-Rule" id="MF_01274"/>
    </source>
</evidence>
<organism>
    <name type="scientific">Burkholderia cenocepacia (strain HI2424)</name>
    <dbReference type="NCBI Taxonomy" id="331272"/>
    <lineage>
        <taxon>Bacteria</taxon>
        <taxon>Pseudomonadati</taxon>
        <taxon>Pseudomonadota</taxon>
        <taxon>Betaproteobacteria</taxon>
        <taxon>Burkholderiales</taxon>
        <taxon>Burkholderiaceae</taxon>
        <taxon>Burkholderia</taxon>
        <taxon>Burkholderia cepacia complex</taxon>
    </lineage>
</organism>